<accession>B7MIM1</accession>
<gene>
    <name evidence="1" type="primary">iscR</name>
    <name type="ordered locus">ECS88_2707</name>
</gene>
<reference key="1">
    <citation type="journal article" date="2009" name="PLoS Genet.">
        <title>Organised genome dynamics in the Escherichia coli species results in highly diverse adaptive paths.</title>
        <authorList>
            <person name="Touchon M."/>
            <person name="Hoede C."/>
            <person name="Tenaillon O."/>
            <person name="Barbe V."/>
            <person name="Baeriswyl S."/>
            <person name="Bidet P."/>
            <person name="Bingen E."/>
            <person name="Bonacorsi S."/>
            <person name="Bouchier C."/>
            <person name="Bouvet O."/>
            <person name="Calteau A."/>
            <person name="Chiapello H."/>
            <person name="Clermont O."/>
            <person name="Cruveiller S."/>
            <person name="Danchin A."/>
            <person name="Diard M."/>
            <person name="Dossat C."/>
            <person name="Karoui M.E."/>
            <person name="Frapy E."/>
            <person name="Garry L."/>
            <person name="Ghigo J.M."/>
            <person name="Gilles A.M."/>
            <person name="Johnson J."/>
            <person name="Le Bouguenec C."/>
            <person name="Lescat M."/>
            <person name="Mangenot S."/>
            <person name="Martinez-Jehanne V."/>
            <person name="Matic I."/>
            <person name="Nassif X."/>
            <person name="Oztas S."/>
            <person name="Petit M.A."/>
            <person name="Pichon C."/>
            <person name="Rouy Z."/>
            <person name="Ruf C.S."/>
            <person name="Schneider D."/>
            <person name="Tourret J."/>
            <person name="Vacherie B."/>
            <person name="Vallenet D."/>
            <person name="Medigue C."/>
            <person name="Rocha E.P.C."/>
            <person name="Denamur E."/>
        </authorList>
    </citation>
    <scope>NUCLEOTIDE SEQUENCE [LARGE SCALE GENOMIC DNA]</scope>
    <source>
        <strain>S88 / ExPEC</strain>
    </source>
</reference>
<keyword id="KW-0001">2Fe-2S</keyword>
<keyword id="KW-0010">Activator</keyword>
<keyword id="KW-0238">DNA-binding</keyword>
<keyword id="KW-0408">Iron</keyword>
<keyword id="KW-0411">Iron-sulfur</keyword>
<keyword id="KW-0479">Metal-binding</keyword>
<keyword id="KW-1185">Reference proteome</keyword>
<keyword id="KW-0678">Repressor</keyword>
<keyword id="KW-0804">Transcription</keyword>
<keyword id="KW-0805">Transcription regulation</keyword>
<protein>
    <recommendedName>
        <fullName evidence="1">HTH-type transcriptional regulator IscR</fullName>
    </recommendedName>
</protein>
<evidence type="ECO:0000255" key="1">
    <source>
        <dbReference type="HAMAP-Rule" id="MF_01176"/>
    </source>
</evidence>
<evidence type="ECO:0000256" key="2">
    <source>
        <dbReference type="SAM" id="MobiDB-lite"/>
    </source>
</evidence>
<proteinExistence type="inferred from homology"/>
<feature type="chain" id="PRO_1000138093" description="HTH-type transcriptional regulator IscR">
    <location>
        <begin position="1"/>
        <end position="162"/>
    </location>
</feature>
<feature type="domain" description="HTH rrf2-type" evidence="1">
    <location>
        <begin position="2"/>
        <end position="131"/>
    </location>
</feature>
<feature type="DNA-binding region" description="H-T-H motif" evidence="1">
    <location>
        <begin position="28"/>
        <end position="51"/>
    </location>
</feature>
<feature type="region of interest" description="Disordered" evidence="2">
    <location>
        <begin position="140"/>
        <end position="162"/>
    </location>
</feature>
<feature type="compositionally biased region" description="Basic and acidic residues" evidence="2">
    <location>
        <begin position="143"/>
        <end position="162"/>
    </location>
</feature>
<feature type="binding site" evidence="1">
    <location>
        <position position="92"/>
    </location>
    <ligand>
        <name>[2Fe-2S] cluster</name>
        <dbReference type="ChEBI" id="CHEBI:190135"/>
    </ligand>
</feature>
<feature type="binding site" evidence="1">
    <location>
        <position position="98"/>
    </location>
    <ligand>
        <name>[2Fe-2S] cluster</name>
        <dbReference type="ChEBI" id="CHEBI:190135"/>
    </ligand>
</feature>
<feature type="binding site" evidence="1">
    <location>
        <position position="104"/>
    </location>
    <ligand>
        <name>[2Fe-2S] cluster</name>
        <dbReference type="ChEBI" id="CHEBI:190135"/>
    </ligand>
</feature>
<name>ISCR_ECO45</name>
<organism>
    <name type="scientific">Escherichia coli O45:K1 (strain S88 / ExPEC)</name>
    <dbReference type="NCBI Taxonomy" id="585035"/>
    <lineage>
        <taxon>Bacteria</taxon>
        <taxon>Pseudomonadati</taxon>
        <taxon>Pseudomonadota</taxon>
        <taxon>Gammaproteobacteria</taxon>
        <taxon>Enterobacterales</taxon>
        <taxon>Enterobacteriaceae</taxon>
        <taxon>Escherichia</taxon>
    </lineage>
</organism>
<dbReference type="EMBL" id="CU928161">
    <property type="protein sequence ID" value="CAR03973.1"/>
    <property type="molecule type" value="Genomic_DNA"/>
</dbReference>
<dbReference type="RefSeq" id="WP_001241357.1">
    <property type="nucleotide sequence ID" value="NC_011742.1"/>
</dbReference>
<dbReference type="SMR" id="B7MIM1"/>
<dbReference type="GeneID" id="86947421"/>
<dbReference type="KEGG" id="ecz:ECS88_2707"/>
<dbReference type="HOGENOM" id="CLU_107144_0_0_6"/>
<dbReference type="Proteomes" id="UP000000747">
    <property type="component" value="Chromosome"/>
</dbReference>
<dbReference type="GO" id="GO:0005829">
    <property type="term" value="C:cytosol"/>
    <property type="evidence" value="ECO:0007669"/>
    <property type="project" value="TreeGrafter"/>
</dbReference>
<dbReference type="GO" id="GO:0051537">
    <property type="term" value="F:2 iron, 2 sulfur cluster binding"/>
    <property type="evidence" value="ECO:0007669"/>
    <property type="project" value="UniProtKB-KW"/>
</dbReference>
<dbReference type="GO" id="GO:0003700">
    <property type="term" value="F:DNA-binding transcription factor activity"/>
    <property type="evidence" value="ECO:0007669"/>
    <property type="project" value="UniProtKB-UniRule"/>
</dbReference>
<dbReference type="GO" id="GO:0003690">
    <property type="term" value="F:double-stranded DNA binding"/>
    <property type="evidence" value="ECO:0007669"/>
    <property type="project" value="UniProtKB-UniRule"/>
</dbReference>
<dbReference type="GO" id="GO:0005506">
    <property type="term" value="F:iron ion binding"/>
    <property type="evidence" value="ECO:0007669"/>
    <property type="project" value="UniProtKB-UniRule"/>
</dbReference>
<dbReference type="FunFam" id="1.10.10.10:FF:000026">
    <property type="entry name" value="HTH-type transcriptional regulator IscR"/>
    <property type="match status" value="1"/>
</dbReference>
<dbReference type="Gene3D" id="1.10.10.10">
    <property type="entry name" value="Winged helix-like DNA-binding domain superfamily/Winged helix DNA-binding domain"/>
    <property type="match status" value="1"/>
</dbReference>
<dbReference type="HAMAP" id="MF_01176">
    <property type="entry name" value="HTH_type_IscR"/>
    <property type="match status" value="1"/>
</dbReference>
<dbReference type="InterPro" id="IPR010242">
    <property type="entry name" value="TF_HTH_IscR"/>
</dbReference>
<dbReference type="InterPro" id="IPR030489">
    <property type="entry name" value="TR_Rrf2-type_CS"/>
</dbReference>
<dbReference type="InterPro" id="IPR000944">
    <property type="entry name" value="Tscrpt_reg_Rrf2"/>
</dbReference>
<dbReference type="InterPro" id="IPR036388">
    <property type="entry name" value="WH-like_DNA-bd_sf"/>
</dbReference>
<dbReference type="InterPro" id="IPR036390">
    <property type="entry name" value="WH_DNA-bd_sf"/>
</dbReference>
<dbReference type="NCBIfam" id="TIGR02010">
    <property type="entry name" value="IscR"/>
    <property type="match status" value="1"/>
</dbReference>
<dbReference type="NCBIfam" id="NF008110">
    <property type="entry name" value="PRK10857.1"/>
    <property type="match status" value="1"/>
</dbReference>
<dbReference type="NCBIfam" id="TIGR00738">
    <property type="entry name" value="rrf2_super"/>
    <property type="match status" value="1"/>
</dbReference>
<dbReference type="PANTHER" id="PTHR33221:SF5">
    <property type="entry name" value="HTH-TYPE TRANSCRIPTIONAL REGULATOR ISCR"/>
    <property type="match status" value="1"/>
</dbReference>
<dbReference type="PANTHER" id="PTHR33221">
    <property type="entry name" value="WINGED HELIX-TURN-HELIX TRANSCRIPTIONAL REGULATOR, RRF2 FAMILY"/>
    <property type="match status" value="1"/>
</dbReference>
<dbReference type="Pfam" id="PF02082">
    <property type="entry name" value="Rrf2"/>
    <property type="match status" value="1"/>
</dbReference>
<dbReference type="SUPFAM" id="SSF46785">
    <property type="entry name" value="Winged helix' DNA-binding domain"/>
    <property type="match status" value="1"/>
</dbReference>
<dbReference type="PROSITE" id="PS01332">
    <property type="entry name" value="HTH_RRF2_1"/>
    <property type="match status" value="1"/>
</dbReference>
<dbReference type="PROSITE" id="PS51197">
    <property type="entry name" value="HTH_RRF2_2"/>
    <property type="match status" value="1"/>
</dbReference>
<sequence length="162" mass="17337">MRLTSKGRYAVTAMLDVALNSEAGPVPLADISERQGISLSYLEQLFSRLRKNGLVSSVRGPGGGYLLGKDASSIAVGEVISAVDESVDATRCQGKGGCQGGDKCLTHALWRDLSDRLTGFLNNITLGELVNNQEVLDVSGRQHTHDAPRTRTQDAIDVKLRA</sequence>
<comment type="function">
    <text evidence="1">Regulates the transcription of several operons and genes involved in the biogenesis of Fe-S clusters and Fe-S-containing proteins.</text>
</comment>
<comment type="cofactor">
    <cofactor evidence="1">
        <name>[2Fe-2S] cluster</name>
        <dbReference type="ChEBI" id="CHEBI:190135"/>
    </cofactor>
    <text evidence="1">Binds 1 [2Fe-2S] cluster.</text>
</comment>